<feature type="chain" id="PRO_0000374212" description="tRNA-2-methylthio-N(6)-dimethylallyladenosine synthase">
    <location>
        <begin position="1"/>
        <end position="466"/>
    </location>
</feature>
<feature type="domain" description="MTTase N-terminal" evidence="1">
    <location>
        <begin position="22"/>
        <end position="139"/>
    </location>
</feature>
<feature type="domain" description="Radical SAM core" evidence="2">
    <location>
        <begin position="152"/>
        <end position="386"/>
    </location>
</feature>
<feature type="domain" description="TRAM" evidence="1">
    <location>
        <begin position="389"/>
        <end position="449"/>
    </location>
</feature>
<feature type="binding site" evidence="1">
    <location>
        <position position="31"/>
    </location>
    <ligand>
        <name>[4Fe-4S] cluster</name>
        <dbReference type="ChEBI" id="CHEBI:49883"/>
        <label>1</label>
    </ligand>
</feature>
<feature type="binding site" evidence="1">
    <location>
        <position position="67"/>
    </location>
    <ligand>
        <name>[4Fe-4S] cluster</name>
        <dbReference type="ChEBI" id="CHEBI:49883"/>
        <label>1</label>
    </ligand>
</feature>
<feature type="binding site" evidence="1">
    <location>
        <position position="101"/>
    </location>
    <ligand>
        <name>[4Fe-4S] cluster</name>
        <dbReference type="ChEBI" id="CHEBI:49883"/>
        <label>1</label>
    </ligand>
</feature>
<feature type="binding site" evidence="1">
    <location>
        <position position="166"/>
    </location>
    <ligand>
        <name>[4Fe-4S] cluster</name>
        <dbReference type="ChEBI" id="CHEBI:49883"/>
        <label>2</label>
        <note>4Fe-4S-S-AdoMet</note>
    </ligand>
</feature>
<feature type="binding site" evidence="1">
    <location>
        <position position="170"/>
    </location>
    <ligand>
        <name>[4Fe-4S] cluster</name>
        <dbReference type="ChEBI" id="CHEBI:49883"/>
        <label>2</label>
        <note>4Fe-4S-S-AdoMet</note>
    </ligand>
</feature>
<feature type="binding site" evidence="1">
    <location>
        <position position="173"/>
    </location>
    <ligand>
        <name>[4Fe-4S] cluster</name>
        <dbReference type="ChEBI" id="CHEBI:49883"/>
        <label>2</label>
        <note>4Fe-4S-S-AdoMet</note>
    </ligand>
</feature>
<organism>
    <name type="scientific">Chloroflexus aurantiacus (strain ATCC 29366 / DSM 635 / J-10-fl)</name>
    <dbReference type="NCBI Taxonomy" id="324602"/>
    <lineage>
        <taxon>Bacteria</taxon>
        <taxon>Bacillati</taxon>
        <taxon>Chloroflexota</taxon>
        <taxon>Chloroflexia</taxon>
        <taxon>Chloroflexales</taxon>
        <taxon>Chloroflexineae</taxon>
        <taxon>Chloroflexaceae</taxon>
        <taxon>Chloroflexus</taxon>
    </lineage>
</organism>
<sequence length="466" mass="52223">MQDVIFFDQRPRPDRDQTPRERRYYVWTVGCQMNISDSERLEAALQGVGYSPATRPEDASFIVLNSCSVRASAEERILGKLGELVRVKRQHPDTRIVLWGCMVGPNNRSIFADQLPMVDHFVSPSAVDEVVALAPNPIYTLDEPALPVRDWSHPPVSVHVPIQYGCNMTCSYCVIPLRRGRERSRPLAEIVEEVRRIVARGAKEITLLGQIVDSWGHDLPGRPELADLLEAVDPTPGLLRLRFLTSHPAWMTDRLIETVARLPRCQPEINLPVQAGSDRVLKLMRRGYTVARYKTLIARIRAAIPDISLTTDIIVGHPGETEDDFRQTMDLCAEIGFDKVHIAAFSARPGTRAAEQEQDPALAVPPAVKEERRRRLEQLQEQIATERMARFLGQTVEVLVEGESKGKWRGRTPGNRLVFFSHPADLTGQLVPVKITATSPWSLQGVPQLDDSVNAQSKENGLVKAR</sequence>
<proteinExistence type="inferred from homology"/>
<dbReference type="EC" id="2.8.4.3" evidence="1"/>
<dbReference type="EMBL" id="CP000909">
    <property type="protein sequence ID" value="ABY35623.1"/>
    <property type="molecule type" value="Genomic_DNA"/>
</dbReference>
<dbReference type="RefSeq" id="WP_012258276.1">
    <property type="nucleotide sequence ID" value="NC_010175.1"/>
</dbReference>
<dbReference type="RefSeq" id="YP_001636012.1">
    <property type="nucleotide sequence ID" value="NC_010175.1"/>
</dbReference>
<dbReference type="SMR" id="A9WHB1"/>
<dbReference type="FunCoup" id="A9WHB1">
    <property type="interactions" value="483"/>
</dbReference>
<dbReference type="STRING" id="324602.Caur_2414"/>
<dbReference type="EnsemblBacteria" id="ABY35623">
    <property type="protein sequence ID" value="ABY35623"/>
    <property type="gene ID" value="Caur_2414"/>
</dbReference>
<dbReference type="KEGG" id="cau:Caur_2414"/>
<dbReference type="PATRIC" id="fig|324602.8.peg.2728"/>
<dbReference type="eggNOG" id="COG0621">
    <property type="taxonomic scope" value="Bacteria"/>
</dbReference>
<dbReference type="HOGENOM" id="CLU_018697_2_0_0"/>
<dbReference type="InParanoid" id="A9WHB1"/>
<dbReference type="Proteomes" id="UP000002008">
    <property type="component" value="Chromosome"/>
</dbReference>
<dbReference type="GO" id="GO:0005829">
    <property type="term" value="C:cytosol"/>
    <property type="evidence" value="ECO:0000318"/>
    <property type="project" value="GO_Central"/>
</dbReference>
<dbReference type="GO" id="GO:0051539">
    <property type="term" value="F:4 iron, 4 sulfur cluster binding"/>
    <property type="evidence" value="ECO:0000318"/>
    <property type="project" value="GO_Central"/>
</dbReference>
<dbReference type="GO" id="GO:0046872">
    <property type="term" value="F:metal ion binding"/>
    <property type="evidence" value="ECO:0007669"/>
    <property type="project" value="UniProtKB-KW"/>
</dbReference>
<dbReference type="GO" id="GO:0035597">
    <property type="term" value="F:N6-isopentenyladenosine methylthiotransferase activity"/>
    <property type="evidence" value="ECO:0000318"/>
    <property type="project" value="GO_Central"/>
</dbReference>
<dbReference type="GO" id="GO:0035600">
    <property type="term" value="P:tRNA methylthiolation"/>
    <property type="evidence" value="ECO:0000318"/>
    <property type="project" value="GO_Central"/>
</dbReference>
<dbReference type="CDD" id="cd01335">
    <property type="entry name" value="Radical_SAM"/>
    <property type="match status" value="1"/>
</dbReference>
<dbReference type="FunFam" id="3.40.50.12160:FF:000024">
    <property type="entry name" value="tRNA-2-methylthio-N(6)-dimethylallyladenosine synthase"/>
    <property type="match status" value="1"/>
</dbReference>
<dbReference type="FunFam" id="3.80.30.20:FF:000001">
    <property type="entry name" value="tRNA-2-methylthio-N(6)-dimethylallyladenosine synthase 2"/>
    <property type="match status" value="1"/>
</dbReference>
<dbReference type="Gene3D" id="3.40.50.12160">
    <property type="entry name" value="Methylthiotransferase, N-terminal domain"/>
    <property type="match status" value="1"/>
</dbReference>
<dbReference type="Gene3D" id="3.80.30.20">
    <property type="entry name" value="tm_1862 like domain"/>
    <property type="match status" value="1"/>
</dbReference>
<dbReference type="HAMAP" id="MF_01864">
    <property type="entry name" value="tRNA_metthiotr_MiaB"/>
    <property type="match status" value="1"/>
</dbReference>
<dbReference type="InterPro" id="IPR006638">
    <property type="entry name" value="Elp3/MiaA/NifB-like_rSAM"/>
</dbReference>
<dbReference type="InterPro" id="IPR005839">
    <property type="entry name" value="Methylthiotransferase"/>
</dbReference>
<dbReference type="InterPro" id="IPR020612">
    <property type="entry name" value="Methylthiotransferase_CS"/>
</dbReference>
<dbReference type="InterPro" id="IPR013848">
    <property type="entry name" value="Methylthiotransferase_N"/>
</dbReference>
<dbReference type="InterPro" id="IPR038135">
    <property type="entry name" value="Methylthiotransferase_N_sf"/>
</dbReference>
<dbReference type="InterPro" id="IPR006463">
    <property type="entry name" value="MiaB_methiolase"/>
</dbReference>
<dbReference type="InterPro" id="IPR007197">
    <property type="entry name" value="rSAM"/>
</dbReference>
<dbReference type="InterPro" id="IPR023404">
    <property type="entry name" value="rSAM_horseshoe"/>
</dbReference>
<dbReference type="InterPro" id="IPR002792">
    <property type="entry name" value="TRAM_dom"/>
</dbReference>
<dbReference type="NCBIfam" id="TIGR01574">
    <property type="entry name" value="miaB-methiolase"/>
    <property type="match status" value="1"/>
</dbReference>
<dbReference type="NCBIfam" id="TIGR00089">
    <property type="entry name" value="MiaB/RimO family radical SAM methylthiotransferase"/>
    <property type="match status" value="1"/>
</dbReference>
<dbReference type="PANTHER" id="PTHR43020">
    <property type="entry name" value="CDK5 REGULATORY SUBUNIT-ASSOCIATED PROTEIN 1"/>
    <property type="match status" value="1"/>
</dbReference>
<dbReference type="PANTHER" id="PTHR43020:SF2">
    <property type="entry name" value="MITOCHONDRIAL TRNA METHYLTHIOTRANSFERASE CDK5RAP1"/>
    <property type="match status" value="1"/>
</dbReference>
<dbReference type="Pfam" id="PF04055">
    <property type="entry name" value="Radical_SAM"/>
    <property type="match status" value="1"/>
</dbReference>
<dbReference type="Pfam" id="PF01938">
    <property type="entry name" value="TRAM"/>
    <property type="match status" value="1"/>
</dbReference>
<dbReference type="Pfam" id="PF00919">
    <property type="entry name" value="UPF0004"/>
    <property type="match status" value="1"/>
</dbReference>
<dbReference type="SFLD" id="SFLDF00273">
    <property type="entry name" value="(dimethylallyl)adenosine_tRNA"/>
    <property type="match status" value="1"/>
</dbReference>
<dbReference type="SFLD" id="SFLDG01082">
    <property type="entry name" value="B12-binding_domain_containing"/>
    <property type="match status" value="1"/>
</dbReference>
<dbReference type="SFLD" id="SFLDS00029">
    <property type="entry name" value="Radical_SAM"/>
    <property type="match status" value="1"/>
</dbReference>
<dbReference type="SMART" id="SM00729">
    <property type="entry name" value="Elp3"/>
    <property type="match status" value="1"/>
</dbReference>
<dbReference type="SUPFAM" id="SSF102114">
    <property type="entry name" value="Radical SAM enzymes"/>
    <property type="match status" value="1"/>
</dbReference>
<dbReference type="PROSITE" id="PS51449">
    <property type="entry name" value="MTTASE_N"/>
    <property type="match status" value="1"/>
</dbReference>
<dbReference type="PROSITE" id="PS01278">
    <property type="entry name" value="MTTASE_RADICAL"/>
    <property type="match status" value="1"/>
</dbReference>
<dbReference type="PROSITE" id="PS51918">
    <property type="entry name" value="RADICAL_SAM"/>
    <property type="match status" value="1"/>
</dbReference>
<dbReference type="PROSITE" id="PS50926">
    <property type="entry name" value="TRAM"/>
    <property type="match status" value="1"/>
</dbReference>
<keyword id="KW-0004">4Fe-4S</keyword>
<keyword id="KW-0963">Cytoplasm</keyword>
<keyword id="KW-0408">Iron</keyword>
<keyword id="KW-0411">Iron-sulfur</keyword>
<keyword id="KW-0479">Metal-binding</keyword>
<keyword id="KW-1185">Reference proteome</keyword>
<keyword id="KW-0949">S-adenosyl-L-methionine</keyword>
<keyword id="KW-0808">Transferase</keyword>
<keyword id="KW-0819">tRNA processing</keyword>
<reference key="1">
    <citation type="journal article" date="2011" name="BMC Genomics">
        <title>Complete genome sequence of the filamentous anoxygenic phototrophic bacterium Chloroflexus aurantiacus.</title>
        <authorList>
            <person name="Tang K.H."/>
            <person name="Barry K."/>
            <person name="Chertkov O."/>
            <person name="Dalin E."/>
            <person name="Han C.S."/>
            <person name="Hauser L.J."/>
            <person name="Honchak B.M."/>
            <person name="Karbach L.E."/>
            <person name="Land M.L."/>
            <person name="Lapidus A."/>
            <person name="Larimer F.W."/>
            <person name="Mikhailova N."/>
            <person name="Pitluck S."/>
            <person name="Pierson B.K."/>
            <person name="Blankenship R.E."/>
        </authorList>
    </citation>
    <scope>NUCLEOTIDE SEQUENCE [LARGE SCALE GENOMIC DNA]</scope>
    <source>
        <strain>ATCC 29366 / DSM 635 / J-10-fl</strain>
    </source>
</reference>
<comment type="function">
    <text evidence="1">Catalyzes the methylthiolation of N6-(dimethylallyl)adenosine (i(6)A), leading to the formation of 2-methylthio-N6-(dimethylallyl)adenosine (ms(2)i(6)A) at position 37 in tRNAs that read codons beginning with uridine.</text>
</comment>
<comment type="catalytic activity">
    <reaction evidence="1">
        <text>N(6)-dimethylallyladenosine(37) in tRNA + (sulfur carrier)-SH + AH2 + 2 S-adenosyl-L-methionine = 2-methylsulfanyl-N(6)-dimethylallyladenosine(37) in tRNA + (sulfur carrier)-H + 5'-deoxyadenosine + L-methionine + A + S-adenosyl-L-homocysteine + 2 H(+)</text>
        <dbReference type="Rhea" id="RHEA:37067"/>
        <dbReference type="Rhea" id="RHEA-COMP:10375"/>
        <dbReference type="Rhea" id="RHEA-COMP:10376"/>
        <dbReference type="Rhea" id="RHEA-COMP:14737"/>
        <dbReference type="Rhea" id="RHEA-COMP:14739"/>
        <dbReference type="ChEBI" id="CHEBI:13193"/>
        <dbReference type="ChEBI" id="CHEBI:15378"/>
        <dbReference type="ChEBI" id="CHEBI:17319"/>
        <dbReference type="ChEBI" id="CHEBI:17499"/>
        <dbReference type="ChEBI" id="CHEBI:29917"/>
        <dbReference type="ChEBI" id="CHEBI:57844"/>
        <dbReference type="ChEBI" id="CHEBI:57856"/>
        <dbReference type="ChEBI" id="CHEBI:59789"/>
        <dbReference type="ChEBI" id="CHEBI:64428"/>
        <dbReference type="ChEBI" id="CHEBI:74415"/>
        <dbReference type="ChEBI" id="CHEBI:74417"/>
        <dbReference type="EC" id="2.8.4.3"/>
    </reaction>
</comment>
<comment type="cofactor">
    <cofactor evidence="1">
        <name>[4Fe-4S] cluster</name>
        <dbReference type="ChEBI" id="CHEBI:49883"/>
    </cofactor>
    <text evidence="1">Binds 2 [4Fe-4S] clusters. One cluster is coordinated with 3 cysteines and an exchangeable S-adenosyl-L-methionine.</text>
</comment>
<comment type="subunit">
    <text evidence="1">Monomer.</text>
</comment>
<comment type="subcellular location">
    <subcellularLocation>
        <location evidence="1">Cytoplasm</location>
    </subcellularLocation>
</comment>
<comment type="similarity">
    <text evidence="1">Belongs to the methylthiotransferase family. MiaB subfamily.</text>
</comment>
<accession>A9WHB1</accession>
<name>MIAB_CHLAA</name>
<protein>
    <recommendedName>
        <fullName evidence="1">tRNA-2-methylthio-N(6)-dimethylallyladenosine synthase</fullName>
        <ecNumber evidence="1">2.8.4.3</ecNumber>
    </recommendedName>
    <alternativeName>
        <fullName evidence="1">(Dimethylallyl)adenosine tRNA methylthiotransferase MiaB</fullName>
    </alternativeName>
    <alternativeName>
        <fullName evidence="1">tRNA-i(6)A37 methylthiotransferase</fullName>
    </alternativeName>
</protein>
<gene>
    <name evidence="1" type="primary">miaB</name>
    <name type="ordered locus">Caur_2414</name>
</gene>
<evidence type="ECO:0000255" key="1">
    <source>
        <dbReference type="HAMAP-Rule" id="MF_01864"/>
    </source>
</evidence>
<evidence type="ECO:0000255" key="2">
    <source>
        <dbReference type="PROSITE-ProRule" id="PRU01266"/>
    </source>
</evidence>